<proteinExistence type="inferred from homology"/>
<evidence type="ECO:0000250" key="1"/>
<evidence type="ECO:0000250" key="2">
    <source>
        <dbReference type="UniProtKB" id="P00157"/>
    </source>
</evidence>
<evidence type="ECO:0000255" key="3">
    <source>
        <dbReference type="PROSITE-ProRule" id="PRU00967"/>
    </source>
</evidence>
<evidence type="ECO:0000255" key="4">
    <source>
        <dbReference type="PROSITE-ProRule" id="PRU00968"/>
    </source>
</evidence>
<name>CYB_TAMTO</name>
<comment type="function">
    <text evidence="2">Component of the ubiquinol-cytochrome c reductase complex (complex III or cytochrome b-c1 complex) that is part of the mitochondrial respiratory chain. The b-c1 complex mediates electron transfer from ubiquinol to cytochrome c. Contributes to the generation of a proton gradient across the mitochondrial membrane that is then used for ATP synthesis.</text>
</comment>
<comment type="cofactor">
    <cofactor evidence="2">
        <name>heme b</name>
        <dbReference type="ChEBI" id="CHEBI:60344"/>
    </cofactor>
    <text evidence="2">Binds 2 heme b groups non-covalently.</text>
</comment>
<comment type="subunit">
    <text evidence="2">The cytochrome bc1 complex contains 11 subunits: 3 respiratory subunits (MT-CYB, CYC1 and UQCRFS1), 2 core proteins (UQCRC1 and UQCRC2) and 6 low-molecular weight proteins (UQCRH/QCR6, UQCRB/QCR7, UQCRQ/QCR8, UQCR10/QCR9, UQCR11/QCR10 and a cleavage product of UQCRFS1). This cytochrome bc1 complex then forms a dimer.</text>
</comment>
<comment type="subcellular location">
    <subcellularLocation>
        <location evidence="2">Mitochondrion inner membrane</location>
        <topology evidence="2">Multi-pass membrane protein</topology>
    </subcellularLocation>
</comment>
<comment type="miscellaneous">
    <text evidence="1">Heme 1 (or BL or b562) is low-potential and absorbs at about 562 nm, and heme 2 (or BH or b566) is high-potential and absorbs at about 566 nm.</text>
</comment>
<comment type="similarity">
    <text evidence="3 4">Belongs to the cytochrome b family.</text>
</comment>
<comment type="caution">
    <text evidence="2">The full-length protein contains only eight transmembrane helices, not nine as predicted by bioinformatics tools.</text>
</comment>
<geneLocation type="mitochondrion"/>
<keyword id="KW-0249">Electron transport</keyword>
<keyword id="KW-0349">Heme</keyword>
<keyword id="KW-0408">Iron</keyword>
<keyword id="KW-0472">Membrane</keyword>
<keyword id="KW-0479">Metal-binding</keyword>
<keyword id="KW-0496">Mitochondrion</keyword>
<keyword id="KW-0999">Mitochondrion inner membrane</keyword>
<keyword id="KW-0679">Respiratory chain</keyword>
<keyword id="KW-0812">Transmembrane</keyword>
<keyword id="KW-1133">Transmembrane helix</keyword>
<keyword id="KW-0813">Transport</keyword>
<keyword id="KW-0830">Ubiquinone</keyword>
<dbReference type="EMBL" id="AF147674">
    <property type="protein sequence ID" value="AAL14073.1"/>
    <property type="molecule type" value="Genomic_DNA"/>
</dbReference>
<dbReference type="EMBL" id="AF147675">
    <property type="protein sequence ID" value="AAL14074.1"/>
    <property type="molecule type" value="Genomic_DNA"/>
</dbReference>
<dbReference type="EMBL" id="AF147676">
    <property type="protein sequence ID" value="AAL14075.1"/>
    <property type="molecule type" value="Genomic_DNA"/>
</dbReference>
<dbReference type="SMR" id="Q94Q84"/>
<dbReference type="GO" id="GO:0005743">
    <property type="term" value="C:mitochondrial inner membrane"/>
    <property type="evidence" value="ECO:0007669"/>
    <property type="project" value="UniProtKB-SubCell"/>
</dbReference>
<dbReference type="GO" id="GO:0045275">
    <property type="term" value="C:respiratory chain complex III"/>
    <property type="evidence" value="ECO:0007669"/>
    <property type="project" value="InterPro"/>
</dbReference>
<dbReference type="GO" id="GO:0046872">
    <property type="term" value="F:metal ion binding"/>
    <property type="evidence" value="ECO:0007669"/>
    <property type="project" value="UniProtKB-KW"/>
</dbReference>
<dbReference type="GO" id="GO:0008121">
    <property type="term" value="F:ubiquinol-cytochrome-c reductase activity"/>
    <property type="evidence" value="ECO:0007669"/>
    <property type="project" value="InterPro"/>
</dbReference>
<dbReference type="GO" id="GO:0006122">
    <property type="term" value="P:mitochondrial electron transport, ubiquinol to cytochrome c"/>
    <property type="evidence" value="ECO:0007669"/>
    <property type="project" value="TreeGrafter"/>
</dbReference>
<dbReference type="CDD" id="cd00290">
    <property type="entry name" value="cytochrome_b_C"/>
    <property type="match status" value="1"/>
</dbReference>
<dbReference type="CDD" id="cd00284">
    <property type="entry name" value="Cytochrome_b_N"/>
    <property type="match status" value="1"/>
</dbReference>
<dbReference type="FunFam" id="1.20.810.10:FF:000002">
    <property type="entry name" value="Cytochrome b"/>
    <property type="match status" value="1"/>
</dbReference>
<dbReference type="Gene3D" id="1.20.810.10">
    <property type="entry name" value="Cytochrome Bc1 Complex, Chain C"/>
    <property type="match status" value="1"/>
</dbReference>
<dbReference type="InterPro" id="IPR005798">
    <property type="entry name" value="Cyt_b/b6_C"/>
</dbReference>
<dbReference type="InterPro" id="IPR036150">
    <property type="entry name" value="Cyt_b/b6_C_sf"/>
</dbReference>
<dbReference type="InterPro" id="IPR005797">
    <property type="entry name" value="Cyt_b/b6_N"/>
</dbReference>
<dbReference type="InterPro" id="IPR027387">
    <property type="entry name" value="Cytb/b6-like_sf"/>
</dbReference>
<dbReference type="InterPro" id="IPR030689">
    <property type="entry name" value="Cytochrome_b"/>
</dbReference>
<dbReference type="InterPro" id="IPR048260">
    <property type="entry name" value="Cytochrome_b_C_euk/bac"/>
</dbReference>
<dbReference type="InterPro" id="IPR048259">
    <property type="entry name" value="Cytochrome_b_N_euk/bac"/>
</dbReference>
<dbReference type="InterPro" id="IPR016174">
    <property type="entry name" value="Di-haem_cyt_TM"/>
</dbReference>
<dbReference type="PANTHER" id="PTHR19271">
    <property type="entry name" value="CYTOCHROME B"/>
    <property type="match status" value="1"/>
</dbReference>
<dbReference type="PANTHER" id="PTHR19271:SF16">
    <property type="entry name" value="CYTOCHROME B"/>
    <property type="match status" value="1"/>
</dbReference>
<dbReference type="Pfam" id="PF00032">
    <property type="entry name" value="Cytochrom_B_C"/>
    <property type="match status" value="1"/>
</dbReference>
<dbReference type="Pfam" id="PF00033">
    <property type="entry name" value="Cytochrome_B"/>
    <property type="match status" value="1"/>
</dbReference>
<dbReference type="PIRSF" id="PIRSF038885">
    <property type="entry name" value="COB"/>
    <property type="match status" value="1"/>
</dbReference>
<dbReference type="SUPFAM" id="SSF81648">
    <property type="entry name" value="a domain/subunit of cytochrome bc1 complex (Ubiquinol-cytochrome c reductase)"/>
    <property type="match status" value="1"/>
</dbReference>
<dbReference type="SUPFAM" id="SSF81342">
    <property type="entry name" value="Transmembrane di-heme cytochromes"/>
    <property type="match status" value="1"/>
</dbReference>
<dbReference type="PROSITE" id="PS51003">
    <property type="entry name" value="CYTB_CTER"/>
    <property type="match status" value="1"/>
</dbReference>
<dbReference type="PROSITE" id="PS51002">
    <property type="entry name" value="CYTB_NTER"/>
    <property type="match status" value="1"/>
</dbReference>
<protein>
    <recommendedName>
        <fullName>Cytochrome b</fullName>
    </recommendedName>
    <alternativeName>
        <fullName>Complex III subunit 3</fullName>
    </alternativeName>
    <alternativeName>
        <fullName>Complex III subunit III</fullName>
    </alternativeName>
    <alternativeName>
        <fullName>Cytochrome b-c1 complex subunit 3</fullName>
    </alternativeName>
    <alternativeName>
        <fullName>Ubiquinol-cytochrome-c reductase complex cytochrome b subunit</fullName>
    </alternativeName>
</protein>
<accession>Q94Q84</accession>
<accession>Q94Y40</accession>
<reference key="1">
    <citation type="journal article" date="2001" name="Mol. Phylogenet. Evol.">
        <title>Molecular phylogeny of the chipmunks inferred from mitochondrial cytochrome b and cytochrome oxidase II gene sequences.</title>
        <authorList>
            <person name="Piaggio A.J."/>
            <person name="Spicer G.S."/>
        </authorList>
    </citation>
    <scope>NUCLEOTIDE SEQUENCE [GENOMIC DNA]</scope>
    <source>
        <strain>Isolate MSB 43429/NK 3136</strain>
        <strain>Isolate MSB 43546/NK 3252</strain>
        <strain>Isolate MSB 53282/NK 7980</strain>
    </source>
</reference>
<organism>
    <name type="scientific">Tamias townsendii</name>
    <name type="common">Townsend's chipmunk</name>
    <name type="synonym">Neotamias townsendii</name>
    <dbReference type="NCBI Taxonomy" id="123796"/>
    <lineage>
        <taxon>Eukaryota</taxon>
        <taxon>Metazoa</taxon>
        <taxon>Chordata</taxon>
        <taxon>Craniata</taxon>
        <taxon>Vertebrata</taxon>
        <taxon>Euteleostomi</taxon>
        <taxon>Mammalia</taxon>
        <taxon>Eutheria</taxon>
        <taxon>Euarchontoglires</taxon>
        <taxon>Glires</taxon>
        <taxon>Rodentia</taxon>
        <taxon>Sciuromorpha</taxon>
        <taxon>Sciuridae</taxon>
        <taxon>Xerinae</taxon>
        <taxon>Marmotini</taxon>
        <taxon>Tamias</taxon>
    </lineage>
</organism>
<feature type="chain" id="PRO_0000257952" description="Cytochrome b">
    <location>
        <begin position="1"/>
        <end position="379"/>
    </location>
</feature>
<feature type="transmembrane region" description="Helical" evidence="2">
    <location>
        <begin position="33"/>
        <end position="53"/>
    </location>
</feature>
<feature type="transmembrane region" description="Helical" evidence="2">
    <location>
        <begin position="77"/>
        <end position="98"/>
    </location>
</feature>
<feature type="transmembrane region" description="Helical" evidence="2">
    <location>
        <begin position="113"/>
        <end position="133"/>
    </location>
</feature>
<feature type="transmembrane region" description="Helical" evidence="2">
    <location>
        <begin position="178"/>
        <end position="198"/>
    </location>
</feature>
<feature type="transmembrane region" description="Helical" evidence="2">
    <location>
        <begin position="226"/>
        <end position="246"/>
    </location>
</feature>
<feature type="transmembrane region" description="Helical" evidence="2">
    <location>
        <begin position="288"/>
        <end position="308"/>
    </location>
</feature>
<feature type="transmembrane region" description="Helical" evidence="2">
    <location>
        <begin position="320"/>
        <end position="340"/>
    </location>
</feature>
<feature type="transmembrane region" description="Helical" evidence="2">
    <location>
        <begin position="347"/>
        <end position="367"/>
    </location>
</feature>
<feature type="binding site" description="axial binding residue" evidence="2">
    <location>
        <position position="83"/>
    </location>
    <ligand>
        <name>heme b</name>
        <dbReference type="ChEBI" id="CHEBI:60344"/>
        <label>b562</label>
    </ligand>
    <ligandPart>
        <name>Fe</name>
        <dbReference type="ChEBI" id="CHEBI:18248"/>
    </ligandPart>
</feature>
<feature type="binding site" description="axial binding residue" evidence="2">
    <location>
        <position position="97"/>
    </location>
    <ligand>
        <name>heme b</name>
        <dbReference type="ChEBI" id="CHEBI:60344"/>
        <label>b566</label>
    </ligand>
    <ligandPart>
        <name>Fe</name>
        <dbReference type="ChEBI" id="CHEBI:18248"/>
    </ligandPart>
</feature>
<feature type="binding site" description="axial binding residue" evidence="2">
    <location>
        <position position="182"/>
    </location>
    <ligand>
        <name>heme b</name>
        <dbReference type="ChEBI" id="CHEBI:60344"/>
        <label>b562</label>
    </ligand>
    <ligandPart>
        <name>Fe</name>
        <dbReference type="ChEBI" id="CHEBI:18248"/>
    </ligandPart>
</feature>
<feature type="binding site" description="axial binding residue" evidence="2">
    <location>
        <position position="196"/>
    </location>
    <ligand>
        <name>heme b</name>
        <dbReference type="ChEBI" id="CHEBI:60344"/>
        <label>b566</label>
    </ligand>
    <ligandPart>
        <name>Fe</name>
        <dbReference type="ChEBI" id="CHEBI:18248"/>
    </ligandPart>
</feature>
<feature type="binding site" evidence="2">
    <location>
        <position position="201"/>
    </location>
    <ligand>
        <name>a ubiquinone</name>
        <dbReference type="ChEBI" id="CHEBI:16389"/>
    </ligand>
</feature>
<feature type="sequence variant" description="In strain: Isolate MSB 53282/NK 7980.">
    <original>A</original>
    <variation>T</variation>
    <location>
        <position position="122"/>
    </location>
</feature>
<feature type="sequence variant" description="In strain: Isolate MSB 53282/NK 7980.">
    <original>L</original>
    <variation>F</variation>
    <location>
        <position position="233"/>
    </location>
</feature>
<feature type="sequence variant" description="In strain: Isolate MSB 53282/NK 7980.">
    <original>M</original>
    <variation>L</variation>
    <location>
        <position position="360"/>
    </location>
</feature>
<gene>
    <name type="primary">MT-CYB</name>
    <name type="synonym">COB</name>
    <name type="synonym">CYTB</name>
    <name type="synonym">MTCYB</name>
</gene>
<sequence length="379" mass="43049">MTNIRKTHPLIKIINHSFIDLPAPSNISAWWNFGSLLGICLIIQILTGLFLAMHYTSDTMTAFSSVTHICRDVNYGWLIRYMHANGASMFFICLFLHVGRGLYYGSYTYFETWNIGVILLFAVMATAFMGYVLPWGQMSFWGATVITNLLSAIPYIGTTLVEWIWGGFSVDKATLTRFFAFHFILPFIITALVMVHLLFLHETGSNNPSGLISDSDKIPFHPYYTIKDILGVLLLILVLMILVLFSPDLLGDPDNYTPANPLNTPPHIKPEWYFLFAYAILRSIPNKLGGVLALVLSILILMLFPILHMSKQRSMMFRPLSQCVFWILVADLFTLTWIGGQPVEYPFIIIGQLASILYFMIILLILPAISLFENKLLKW</sequence>